<proteinExistence type="inferred from homology"/>
<gene>
    <name evidence="6" type="primary">Nat8f2</name>
    <name evidence="6" type="synonym">Cml2</name>
</gene>
<dbReference type="EC" id="2.3.1.-" evidence="5"/>
<dbReference type="EMBL" id="AABR03032130">
    <property type="status" value="NOT_ANNOTATED_CDS"/>
    <property type="molecule type" value="Genomic_DNA"/>
</dbReference>
<dbReference type="RefSeq" id="XP_006225037.1">
    <property type="nucleotide sequence ID" value="XM_006224975.3"/>
</dbReference>
<dbReference type="SMR" id="P85118"/>
<dbReference type="FunCoup" id="P85118">
    <property type="interactions" value="39"/>
</dbReference>
<dbReference type="STRING" id="10116.ENSRNOP00000065306"/>
<dbReference type="PhosphoSitePlus" id="P85118"/>
<dbReference type="PaxDb" id="10116-ENSRNOP00000065306"/>
<dbReference type="UCSC" id="RGD:1561619">
    <property type="organism name" value="rat"/>
</dbReference>
<dbReference type="AGR" id="RGD:1561619"/>
<dbReference type="AGR" id="RGD:7636572"/>
<dbReference type="RGD" id="1561619">
    <property type="gene designation" value="Nat8f2"/>
</dbReference>
<dbReference type="eggNOG" id="KOG3139">
    <property type="taxonomic scope" value="Eukaryota"/>
</dbReference>
<dbReference type="InParanoid" id="P85118"/>
<dbReference type="PhylomeDB" id="P85118"/>
<dbReference type="PRO" id="PR:P85118"/>
<dbReference type="Proteomes" id="UP000002494">
    <property type="component" value="Unplaced"/>
</dbReference>
<dbReference type="GO" id="GO:0016020">
    <property type="term" value="C:membrane"/>
    <property type="evidence" value="ECO:0007669"/>
    <property type="project" value="UniProtKB-SubCell"/>
</dbReference>
<dbReference type="GO" id="GO:0008080">
    <property type="term" value="F:N-acetyltransferase activity"/>
    <property type="evidence" value="ECO:0000318"/>
    <property type="project" value="GO_Central"/>
</dbReference>
<dbReference type="GO" id="GO:0007369">
    <property type="term" value="P:gastrulation"/>
    <property type="evidence" value="ECO:0007669"/>
    <property type="project" value="UniProtKB-KW"/>
</dbReference>
<dbReference type="CDD" id="cd04301">
    <property type="entry name" value="NAT_SF"/>
    <property type="match status" value="1"/>
</dbReference>
<dbReference type="Gene3D" id="3.40.630.30">
    <property type="match status" value="1"/>
</dbReference>
<dbReference type="InterPro" id="IPR016181">
    <property type="entry name" value="Acyl_CoA_acyltransferase"/>
</dbReference>
<dbReference type="InterPro" id="IPR000182">
    <property type="entry name" value="GNAT_dom"/>
</dbReference>
<dbReference type="InterPro" id="IPR050769">
    <property type="entry name" value="NAT_camello-type"/>
</dbReference>
<dbReference type="PANTHER" id="PTHR13947">
    <property type="entry name" value="GNAT FAMILY N-ACETYLTRANSFERASE"/>
    <property type="match status" value="1"/>
</dbReference>
<dbReference type="PANTHER" id="PTHR13947:SF6">
    <property type="entry name" value="N-ACETYLTRANSFERASE 8 (GCN5-RELATED) FAMILY MEMBER 4-RELATED"/>
    <property type="match status" value="1"/>
</dbReference>
<dbReference type="Pfam" id="PF00583">
    <property type="entry name" value="Acetyltransf_1"/>
    <property type="match status" value="1"/>
</dbReference>
<dbReference type="SUPFAM" id="SSF55729">
    <property type="entry name" value="Acyl-CoA N-acyltransferases (Nat)"/>
    <property type="match status" value="1"/>
</dbReference>
<dbReference type="PROSITE" id="PS51186">
    <property type="entry name" value="GNAT"/>
    <property type="match status" value="1"/>
</dbReference>
<feature type="chain" id="PRO_0000284689" description="N-acetyltransferase family 8 member 2">
    <location>
        <begin position="1"/>
        <end position="226"/>
    </location>
</feature>
<feature type="transmembrane region" description="Helical" evidence="2">
    <location>
        <begin position="33"/>
        <end position="55"/>
    </location>
</feature>
<feature type="transmembrane region" description="Helical" evidence="2">
    <location>
        <begin position="60"/>
        <end position="82"/>
    </location>
</feature>
<feature type="domain" description="N-acetyltransferase" evidence="3">
    <location>
        <begin position="69"/>
        <end position="221"/>
    </location>
</feature>
<feature type="modified residue" description="N6-acetyllysine" evidence="1">
    <location>
        <position position="204"/>
    </location>
</feature>
<sequence>MAPYHIRQFQDRDHRRVLDLFSRGMEEHVPAAFYHVLTLPHSLLLFPGVPVTIILVSGSWLLATVYSFLFLLCLRLIFWVSCRNYVAKCLQADLADITKSYLNAHGSFWVAESGGQVVGIVAALPVKEPPSGRKQLQLFRLSVSSQHRGQGIAKALVRIVLQFARDQGYTDVVLVTGNMQYSAISLYQGMGFQKTGHYFVSIAKRLIGLSIFHFTYSLPSVWEPRM</sequence>
<comment type="function">
    <text evidence="1 5">Probable acetyltransferase (Probable). Has no detectable histone acetyltransferase activity towards histone H3 or H4.</text>
</comment>
<comment type="subcellular location">
    <subcellularLocation>
        <location evidence="2">Membrane</location>
        <topology evidence="2">Multi-pass membrane protein</topology>
    </subcellularLocation>
</comment>
<comment type="similarity">
    <text evidence="5">Belongs to the camello family.</text>
</comment>
<reference evidence="5" key="1">
    <citation type="journal article" date="2004" name="Nature">
        <title>Genome sequence of the Brown Norway rat yields insights into mammalian evolution.</title>
        <authorList>
            <person name="Gibbs R.A."/>
            <person name="Weinstock G.M."/>
            <person name="Metzker M.L."/>
            <person name="Muzny D.M."/>
            <person name="Sodergren E.J."/>
            <person name="Scherer S."/>
            <person name="Scott G."/>
            <person name="Steffen D."/>
            <person name="Worley K.C."/>
            <person name="Burch P.E."/>
            <person name="Okwuonu G."/>
            <person name="Hines S."/>
            <person name="Lewis L."/>
            <person name="Deramo C."/>
            <person name="Delgado O."/>
            <person name="Dugan-Rocha S."/>
            <person name="Miner G."/>
            <person name="Morgan M."/>
            <person name="Hawes A."/>
            <person name="Gill R."/>
            <person name="Holt R.A."/>
            <person name="Adams M.D."/>
            <person name="Amanatides P.G."/>
            <person name="Baden-Tillson H."/>
            <person name="Barnstead M."/>
            <person name="Chin S."/>
            <person name="Evans C.A."/>
            <person name="Ferriera S."/>
            <person name="Fosler C."/>
            <person name="Glodek A."/>
            <person name="Gu Z."/>
            <person name="Jennings D."/>
            <person name="Kraft C.L."/>
            <person name="Nguyen T."/>
            <person name="Pfannkoch C.M."/>
            <person name="Sitter C."/>
            <person name="Sutton G.G."/>
            <person name="Venter J.C."/>
            <person name="Woodage T."/>
            <person name="Smith D."/>
            <person name="Lee H.-M."/>
            <person name="Gustafson E."/>
            <person name="Cahill P."/>
            <person name="Kana A."/>
            <person name="Doucette-Stamm L."/>
            <person name="Weinstock K."/>
            <person name="Fechtel K."/>
            <person name="Weiss R.B."/>
            <person name="Dunn D.M."/>
            <person name="Green E.D."/>
            <person name="Blakesley R.W."/>
            <person name="Bouffard G.G."/>
            <person name="De Jong P.J."/>
            <person name="Osoegawa K."/>
            <person name="Zhu B."/>
            <person name="Marra M."/>
            <person name="Schein J."/>
            <person name="Bosdet I."/>
            <person name="Fjell C."/>
            <person name="Jones S."/>
            <person name="Krzywinski M."/>
            <person name="Mathewson C."/>
            <person name="Siddiqui A."/>
            <person name="Wye N."/>
            <person name="McPherson J."/>
            <person name="Zhao S."/>
            <person name="Fraser C.M."/>
            <person name="Shetty J."/>
            <person name="Shatsman S."/>
            <person name="Geer K."/>
            <person name="Chen Y."/>
            <person name="Abramzon S."/>
            <person name="Nierman W.C."/>
            <person name="Havlak P.H."/>
            <person name="Chen R."/>
            <person name="Durbin K.J."/>
            <person name="Egan A."/>
            <person name="Ren Y."/>
            <person name="Song X.-Z."/>
            <person name="Li B."/>
            <person name="Liu Y."/>
            <person name="Qin X."/>
            <person name="Cawley S."/>
            <person name="Cooney A.J."/>
            <person name="D'Souza L.M."/>
            <person name="Martin K."/>
            <person name="Wu J.Q."/>
            <person name="Gonzalez-Garay M.L."/>
            <person name="Jackson A.R."/>
            <person name="Kalafus K.J."/>
            <person name="McLeod M.P."/>
            <person name="Milosavljevic A."/>
            <person name="Virk D."/>
            <person name="Volkov A."/>
            <person name="Wheeler D.A."/>
            <person name="Zhang Z."/>
            <person name="Bailey J.A."/>
            <person name="Eichler E.E."/>
            <person name="Tuzun E."/>
            <person name="Birney E."/>
            <person name="Mongin E."/>
            <person name="Ureta-Vidal A."/>
            <person name="Woodwark C."/>
            <person name="Zdobnov E."/>
            <person name="Bork P."/>
            <person name="Suyama M."/>
            <person name="Torrents D."/>
            <person name="Alexandersson M."/>
            <person name="Trask B.J."/>
            <person name="Young J.M."/>
            <person name="Huang H."/>
            <person name="Wang H."/>
            <person name="Xing H."/>
            <person name="Daniels S."/>
            <person name="Gietzen D."/>
            <person name="Schmidt J."/>
            <person name="Stevens K."/>
            <person name="Vitt U."/>
            <person name="Wingrove J."/>
            <person name="Camara F."/>
            <person name="Mar Alba M."/>
            <person name="Abril J.F."/>
            <person name="Guigo R."/>
            <person name="Smit A."/>
            <person name="Dubchak I."/>
            <person name="Rubin E.M."/>
            <person name="Couronne O."/>
            <person name="Poliakov A."/>
            <person name="Huebner N."/>
            <person name="Ganten D."/>
            <person name="Goesele C."/>
            <person name="Hummel O."/>
            <person name="Kreitler T."/>
            <person name="Lee Y.-A."/>
            <person name="Monti J."/>
            <person name="Schulz H."/>
            <person name="Zimdahl H."/>
            <person name="Himmelbauer H."/>
            <person name="Lehrach H."/>
            <person name="Jacob H.J."/>
            <person name="Bromberg S."/>
            <person name="Gullings-Handley J."/>
            <person name="Jensen-Seaman M.I."/>
            <person name="Kwitek A.E."/>
            <person name="Lazar J."/>
            <person name="Pasko D."/>
            <person name="Tonellato P.J."/>
            <person name="Twigger S."/>
            <person name="Ponting C.P."/>
            <person name="Duarte J.M."/>
            <person name="Rice S."/>
            <person name="Goodstadt L."/>
            <person name="Beatson S.A."/>
            <person name="Emes R.D."/>
            <person name="Winter E.E."/>
            <person name="Webber C."/>
            <person name="Brandt P."/>
            <person name="Nyakatura G."/>
            <person name="Adetobi M."/>
            <person name="Chiaromonte F."/>
            <person name="Elnitski L."/>
            <person name="Eswara P."/>
            <person name="Hardison R.C."/>
            <person name="Hou M."/>
            <person name="Kolbe D."/>
            <person name="Makova K."/>
            <person name="Miller W."/>
            <person name="Nekrutenko A."/>
            <person name="Riemer C."/>
            <person name="Schwartz S."/>
            <person name="Taylor J."/>
            <person name="Yang S."/>
            <person name="Zhang Y."/>
            <person name="Lindpaintner K."/>
            <person name="Andrews T.D."/>
            <person name="Caccamo M."/>
            <person name="Clamp M."/>
            <person name="Clarke L."/>
            <person name="Curwen V."/>
            <person name="Durbin R.M."/>
            <person name="Eyras E."/>
            <person name="Searle S.M."/>
            <person name="Cooper G.M."/>
            <person name="Batzoglou S."/>
            <person name="Brudno M."/>
            <person name="Sidow A."/>
            <person name="Stone E.A."/>
            <person name="Payseur B.A."/>
            <person name="Bourque G."/>
            <person name="Lopez-Otin C."/>
            <person name="Puente X.S."/>
            <person name="Chakrabarti K."/>
            <person name="Chatterji S."/>
            <person name="Dewey C."/>
            <person name="Pachter L."/>
            <person name="Bray N."/>
            <person name="Yap V.B."/>
            <person name="Caspi A."/>
            <person name="Tesler G."/>
            <person name="Pevzner P.A."/>
            <person name="Haussler D."/>
            <person name="Roskin K.M."/>
            <person name="Baertsch R."/>
            <person name="Clawson H."/>
            <person name="Furey T.S."/>
            <person name="Hinrichs A.S."/>
            <person name="Karolchik D."/>
            <person name="Kent W.J."/>
            <person name="Rosenbloom K.R."/>
            <person name="Trumbower H."/>
            <person name="Weirauch M."/>
            <person name="Cooper D.N."/>
            <person name="Stenson P.D."/>
            <person name="Ma B."/>
            <person name="Brent M."/>
            <person name="Arumugam M."/>
            <person name="Shteynberg D."/>
            <person name="Copley R.R."/>
            <person name="Taylor M.S."/>
            <person name="Riethman H."/>
            <person name="Mudunuri U."/>
            <person name="Peterson J."/>
            <person name="Guyer M."/>
            <person name="Felsenfeld A."/>
            <person name="Old S."/>
            <person name="Mockrin S."/>
            <person name="Collins F.S."/>
        </authorList>
    </citation>
    <scope>NUCLEOTIDE SEQUENCE [LARGE SCALE GENOMIC DNA]</scope>
    <source>
        <strain evidence="4">Brown Norway</strain>
    </source>
</reference>
<organism>
    <name type="scientific">Rattus norvegicus</name>
    <name type="common">Rat</name>
    <dbReference type="NCBI Taxonomy" id="10116"/>
    <lineage>
        <taxon>Eukaryota</taxon>
        <taxon>Metazoa</taxon>
        <taxon>Chordata</taxon>
        <taxon>Craniata</taxon>
        <taxon>Vertebrata</taxon>
        <taxon>Euteleostomi</taxon>
        <taxon>Mammalia</taxon>
        <taxon>Eutheria</taxon>
        <taxon>Euarchontoglires</taxon>
        <taxon>Glires</taxon>
        <taxon>Rodentia</taxon>
        <taxon>Myomorpha</taxon>
        <taxon>Muroidea</taxon>
        <taxon>Muridae</taxon>
        <taxon>Murinae</taxon>
        <taxon>Rattus</taxon>
    </lineage>
</organism>
<evidence type="ECO:0000250" key="1">
    <source>
        <dbReference type="UniProtKB" id="Q8CHQ9"/>
    </source>
</evidence>
<evidence type="ECO:0000255" key="2"/>
<evidence type="ECO:0000255" key="3">
    <source>
        <dbReference type="PROSITE-ProRule" id="PRU00532"/>
    </source>
</evidence>
<evidence type="ECO:0000269" key="4">
    <source>
    </source>
</evidence>
<evidence type="ECO:0000305" key="5"/>
<evidence type="ECO:0000312" key="6">
    <source>
        <dbReference type="RGD" id="1561619"/>
    </source>
</evidence>
<keyword id="KW-0007">Acetylation</keyword>
<keyword id="KW-0012">Acyltransferase</keyword>
<keyword id="KW-0217">Developmental protein</keyword>
<keyword id="KW-0306">Gastrulation</keyword>
<keyword id="KW-0472">Membrane</keyword>
<keyword id="KW-1185">Reference proteome</keyword>
<keyword id="KW-0808">Transferase</keyword>
<keyword id="KW-0812">Transmembrane</keyword>
<keyword id="KW-1133">Transmembrane helix</keyword>
<protein>
    <recommendedName>
        <fullName evidence="6">N-acetyltransferase family 8 member 2</fullName>
        <ecNumber evidence="5">2.3.1.-</ecNumber>
    </recommendedName>
    <alternativeName>
        <fullName evidence="6">Camello-like protein 2</fullName>
    </alternativeName>
    <alternativeName>
        <fullName evidence="6">N-acetyltransferase-like protein CML2</fullName>
    </alternativeName>
</protein>
<accession>P85118</accession>
<name>NT8F2_RAT</name>